<dbReference type="EC" id="3.6.1.-" evidence="1"/>
<dbReference type="EMBL" id="AM286415">
    <property type="protein sequence ID" value="CAL10151.1"/>
    <property type="molecule type" value="Genomic_DNA"/>
</dbReference>
<dbReference type="RefSeq" id="WP_011815252.1">
    <property type="nucleotide sequence ID" value="NC_008800.1"/>
</dbReference>
<dbReference type="RefSeq" id="YP_001004403.1">
    <property type="nucleotide sequence ID" value="NC_008800.1"/>
</dbReference>
<dbReference type="SMR" id="A1JHR5"/>
<dbReference type="KEGG" id="yen:YE0006"/>
<dbReference type="PATRIC" id="fig|393305.7.peg.95"/>
<dbReference type="eggNOG" id="COG0714">
    <property type="taxonomic scope" value="Bacteria"/>
</dbReference>
<dbReference type="HOGENOM" id="CLU_018678_1_0_6"/>
<dbReference type="OrthoDB" id="1814213at2"/>
<dbReference type="Proteomes" id="UP000000642">
    <property type="component" value="Chromosome"/>
</dbReference>
<dbReference type="GO" id="GO:0005737">
    <property type="term" value="C:cytoplasm"/>
    <property type="evidence" value="ECO:0007669"/>
    <property type="project" value="UniProtKB-SubCell"/>
</dbReference>
<dbReference type="GO" id="GO:0005524">
    <property type="term" value="F:ATP binding"/>
    <property type="evidence" value="ECO:0007669"/>
    <property type="project" value="UniProtKB-KW"/>
</dbReference>
<dbReference type="GO" id="GO:0016887">
    <property type="term" value="F:ATP hydrolysis activity"/>
    <property type="evidence" value="ECO:0007669"/>
    <property type="project" value="UniProtKB-UniRule"/>
</dbReference>
<dbReference type="CDD" id="cd00009">
    <property type="entry name" value="AAA"/>
    <property type="match status" value="1"/>
</dbReference>
<dbReference type="Gene3D" id="1.20.58.1510">
    <property type="match status" value="1"/>
</dbReference>
<dbReference type="Gene3D" id="2.40.128.430">
    <property type="match status" value="1"/>
</dbReference>
<dbReference type="Gene3D" id="3.40.50.300">
    <property type="entry name" value="P-loop containing nucleotide triphosphate hydrolases"/>
    <property type="match status" value="1"/>
</dbReference>
<dbReference type="HAMAP" id="MF_01625">
    <property type="entry name" value="ATPase_RavA"/>
    <property type="match status" value="1"/>
</dbReference>
<dbReference type="InterPro" id="IPR003593">
    <property type="entry name" value="AAA+_ATPase"/>
</dbReference>
<dbReference type="InterPro" id="IPR023671">
    <property type="entry name" value="ATPase_RavA"/>
</dbReference>
<dbReference type="InterPro" id="IPR022547">
    <property type="entry name" value="ATPase_RavA_C"/>
</dbReference>
<dbReference type="InterPro" id="IPR045427">
    <property type="entry name" value="MoxR"/>
</dbReference>
<dbReference type="InterPro" id="IPR027417">
    <property type="entry name" value="P-loop_NTPase"/>
</dbReference>
<dbReference type="InterPro" id="IPR041538">
    <property type="entry name" value="RavA-like_AAA_lid"/>
</dbReference>
<dbReference type="InterPro" id="IPR050513">
    <property type="entry name" value="RavA_ATPases"/>
</dbReference>
<dbReference type="InterPro" id="IPR046898">
    <property type="entry name" value="RavA_LARA_dom"/>
</dbReference>
<dbReference type="InterPro" id="IPR046932">
    <property type="entry name" value="RavA_LARA_sf"/>
</dbReference>
<dbReference type="NCBIfam" id="NF010054">
    <property type="entry name" value="PRK13531.1"/>
    <property type="match status" value="1"/>
</dbReference>
<dbReference type="PANTHER" id="PTHR32204">
    <property type="entry name" value="ATPASE RAVA"/>
    <property type="match status" value="1"/>
</dbReference>
<dbReference type="PANTHER" id="PTHR32204:SF0">
    <property type="entry name" value="ATPASE RAVA"/>
    <property type="match status" value="1"/>
</dbReference>
<dbReference type="Pfam" id="PF17868">
    <property type="entry name" value="AAA_lid_8"/>
    <property type="match status" value="1"/>
</dbReference>
<dbReference type="Pfam" id="PF12592">
    <property type="entry name" value="ATPase_RavA_C"/>
    <property type="match status" value="1"/>
</dbReference>
<dbReference type="Pfam" id="PF20030">
    <property type="entry name" value="bpMoxR"/>
    <property type="match status" value="1"/>
</dbReference>
<dbReference type="Pfam" id="PF20265">
    <property type="entry name" value="LARA_dom"/>
    <property type="match status" value="1"/>
</dbReference>
<dbReference type="SMART" id="SM00382">
    <property type="entry name" value="AAA"/>
    <property type="match status" value="1"/>
</dbReference>
<dbReference type="SUPFAM" id="SSF52540">
    <property type="entry name" value="P-loop containing nucleoside triphosphate hydrolases"/>
    <property type="match status" value="1"/>
</dbReference>
<evidence type="ECO:0000255" key="1">
    <source>
        <dbReference type="HAMAP-Rule" id="MF_01625"/>
    </source>
</evidence>
<organism>
    <name type="scientific">Yersinia enterocolitica serotype O:8 / biotype 1B (strain NCTC 13174 / 8081)</name>
    <dbReference type="NCBI Taxonomy" id="393305"/>
    <lineage>
        <taxon>Bacteria</taxon>
        <taxon>Pseudomonadati</taxon>
        <taxon>Pseudomonadota</taxon>
        <taxon>Gammaproteobacteria</taxon>
        <taxon>Enterobacterales</taxon>
        <taxon>Yersiniaceae</taxon>
        <taxon>Yersinia</taxon>
    </lineage>
</organism>
<keyword id="KW-0067">ATP-binding</keyword>
<keyword id="KW-0143">Chaperone</keyword>
<keyword id="KW-0963">Cytoplasm</keyword>
<keyword id="KW-0378">Hydrolase</keyword>
<keyword id="KW-0547">Nucleotide-binding</keyword>
<gene>
    <name evidence="1" type="primary">ravA</name>
    <name type="ordered locus">YE0006</name>
</gene>
<name>RAVA_YERE8</name>
<sequence length="502" mass="57374">MAQSSQLAERISRLSSALESGLYERQEAIRLCLLAALSGESVFLLGPPGIAKSLIARRLKFAFRNARAFEYLMTRFSTPEEVFGPLSIQALKEEGRYQRMTGGYLPEAEIVFLDEIWKAGPAILNTLLTAINERRFRNGDREDSIPMRLLVTASNELPDADSSLEALYDRMLIRLWLDRVQEKQNFRSLLLSRQNENHNPVAENLSISDEEFYQWQPLIDKIALPDNCFELIFQLRQQLSAQEQAPYVSDRRWKKALRLLQASAFFSGRDEITPIDLILLKDCLWHDLSSLKLLQQQLEQLLTEHGYQQQSLLMKLQHIHAQWLKHQQQQSDHQALTVTKQSGMFSRKPQYSLPDHLTDSTLTLFLQKPLSLHDIQVNHLQIEKEMLVQWLNKGGVLRAKLNGVGYAQSIDAEVDDQLHITVLDVSRQSSILSQPGASTASVPPELLVELAELENSLAEQRRLFSQHQPCLFTPSSWLAKIEASLLNVAEQVKQLQQKLRGH</sequence>
<proteinExistence type="inferred from homology"/>
<reference key="1">
    <citation type="journal article" date="2006" name="PLoS Genet.">
        <title>The complete genome sequence and comparative genome analysis of the high pathogenicity Yersinia enterocolitica strain 8081.</title>
        <authorList>
            <person name="Thomson N.R."/>
            <person name="Howard S."/>
            <person name="Wren B.W."/>
            <person name="Holden M.T.G."/>
            <person name="Crossman L."/>
            <person name="Challis G.L."/>
            <person name="Churcher C."/>
            <person name="Mungall K."/>
            <person name="Brooks K."/>
            <person name="Chillingworth T."/>
            <person name="Feltwell T."/>
            <person name="Abdellah Z."/>
            <person name="Hauser H."/>
            <person name="Jagels K."/>
            <person name="Maddison M."/>
            <person name="Moule S."/>
            <person name="Sanders M."/>
            <person name="Whitehead S."/>
            <person name="Quail M.A."/>
            <person name="Dougan G."/>
            <person name="Parkhill J."/>
            <person name="Prentice M.B."/>
        </authorList>
    </citation>
    <scope>NUCLEOTIDE SEQUENCE [LARGE SCALE GENOMIC DNA]</scope>
    <source>
        <strain>NCTC 13174 / 8081</strain>
    </source>
</reference>
<protein>
    <recommendedName>
        <fullName evidence="1">Regulatory ATPase RavA</fullName>
        <ecNumber evidence="1">3.6.1.-</ecNumber>
    </recommendedName>
    <alternativeName>
        <fullName evidence="1">Regulatory ATPase variant A</fullName>
    </alternativeName>
</protein>
<comment type="function">
    <text evidence="1">Component of the RavA-ViaA chaperone complex, which may act on the membrane to optimize the function of some of the respiratory chains. RavA functions as an ATPase.</text>
</comment>
<comment type="catalytic activity">
    <reaction evidence="1">
        <text>ATP + H2O = ADP + phosphate + H(+)</text>
        <dbReference type="Rhea" id="RHEA:13065"/>
        <dbReference type="ChEBI" id="CHEBI:15377"/>
        <dbReference type="ChEBI" id="CHEBI:15378"/>
        <dbReference type="ChEBI" id="CHEBI:30616"/>
        <dbReference type="ChEBI" id="CHEBI:43474"/>
        <dbReference type="ChEBI" id="CHEBI:456216"/>
    </reaction>
</comment>
<comment type="activity regulation">
    <text evidence="1">ATPase activity is stimulated by ViaA.</text>
</comment>
<comment type="subunit">
    <text evidence="1">Homohexamer. Interacts with ViaA.</text>
</comment>
<comment type="subcellular location">
    <subcellularLocation>
        <location evidence="1">Cytoplasm</location>
    </subcellularLocation>
</comment>
<comment type="similarity">
    <text evidence="1">Belongs to the RavA family.</text>
</comment>
<feature type="chain" id="PRO_0000292353" description="Regulatory ATPase RavA">
    <location>
        <begin position="1"/>
        <end position="502"/>
    </location>
</feature>
<feature type="binding site" evidence="1">
    <location>
        <position position="23"/>
    </location>
    <ligand>
        <name>ADP</name>
        <dbReference type="ChEBI" id="CHEBI:456216"/>
    </ligand>
</feature>
<feature type="binding site" evidence="1">
    <location>
        <position position="49"/>
    </location>
    <ligand>
        <name>ADP</name>
        <dbReference type="ChEBI" id="CHEBI:456216"/>
    </ligand>
</feature>
<feature type="binding site" evidence="1">
    <location>
        <position position="50"/>
    </location>
    <ligand>
        <name>ADP</name>
        <dbReference type="ChEBI" id="CHEBI:456216"/>
    </ligand>
</feature>
<feature type="binding site" evidence="1">
    <location>
        <position position="51"/>
    </location>
    <ligand>
        <name>ADP</name>
        <dbReference type="ChEBI" id="CHEBI:456216"/>
    </ligand>
</feature>
<feature type="binding site" evidence="1">
    <location>
        <position position="52"/>
    </location>
    <ligand>
        <name>ADP</name>
        <dbReference type="ChEBI" id="CHEBI:456216"/>
    </ligand>
</feature>
<feature type="binding site" evidence="1">
    <location>
        <position position="53"/>
    </location>
    <ligand>
        <name>ADP</name>
        <dbReference type="ChEBI" id="CHEBI:456216"/>
    </ligand>
</feature>
<feature type="binding site" evidence="1">
    <location>
        <position position="54"/>
    </location>
    <ligand>
        <name>ADP</name>
        <dbReference type="ChEBI" id="CHEBI:456216"/>
    </ligand>
</feature>
<feature type="binding site" evidence="1">
    <location>
        <position position="196"/>
    </location>
    <ligand>
        <name>ADP</name>
        <dbReference type="ChEBI" id="CHEBI:456216"/>
    </ligand>
</feature>
<accession>A1JHR5</accession>